<proteinExistence type="inferred from homology"/>
<keyword id="KW-1185">Reference proteome</keyword>
<keyword id="KW-0687">Ribonucleoprotein</keyword>
<keyword id="KW-0689">Ribosomal protein</keyword>
<keyword id="KW-0694">RNA-binding</keyword>
<keyword id="KW-0699">rRNA-binding</keyword>
<organism>
    <name type="scientific">Treponema pallidum (strain Nichols)</name>
    <dbReference type="NCBI Taxonomy" id="243276"/>
    <lineage>
        <taxon>Bacteria</taxon>
        <taxon>Pseudomonadati</taxon>
        <taxon>Spirochaetota</taxon>
        <taxon>Spirochaetia</taxon>
        <taxon>Spirochaetales</taxon>
        <taxon>Treponemataceae</taxon>
        <taxon>Treponema</taxon>
    </lineage>
</organism>
<dbReference type="EMBL" id="AE000520">
    <property type="protein sequence ID" value="AAC65814.1"/>
    <property type="molecule type" value="Genomic_DNA"/>
</dbReference>
<dbReference type="PIR" id="H71273">
    <property type="entry name" value="H71273"/>
</dbReference>
<dbReference type="RefSeq" id="WP_010882292.1">
    <property type="nucleotide sequence ID" value="NC_021490.2"/>
</dbReference>
<dbReference type="SMR" id="O83820"/>
<dbReference type="IntAct" id="O83820">
    <property type="interactions" value="1"/>
</dbReference>
<dbReference type="STRING" id="243276.TP_0848"/>
<dbReference type="EnsemblBacteria" id="AAC65814">
    <property type="protein sequence ID" value="AAC65814"/>
    <property type="gene ID" value="TP_0848"/>
</dbReference>
<dbReference type="GeneID" id="93876606"/>
<dbReference type="KEGG" id="tpa:TP_0848"/>
<dbReference type="KEGG" id="tpw:TPANIC_0848"/>
<dbReference type="eggNOG" id="COG0292">
    <property type="taxonomic scope" value="Bacteria"/>
</dbReference>
<dbReference type="HOGENOM" id="CLU_123265_0_1_12"/>
<dbReference type="OrthoDB" id="9808966at2"/>
<dbReference type="Proteomes" id="UP000000811">
    <property type="component" value="Chromosome"/>
</dbReference>
<dbReference type="GO" id="GO:1990904">
    <property type="term" value="C:ribonucleoprotein complex"/>
    <property type="evidence" value="ECO:0007669"/>
    <property type="project" value="UniProtKB-KW"/>
</dbReference>
<dbReference type="GO" id="GO:0005840">
    <property type="term" value="C:ribosome"/>
    <property type="evidence" value="ECO:0007669"/>
    <property type="project" value="UniProtKB-KW"/>
</dbReference>
<dbReference type="GO" id="GO:0019843">
    <property type="term" value="F:rRNA binding"/>
    <property type="evidence" value="ECO:0007669"/>
    <property type="project" value="UniProtKB-UniRule"/>
</dbReference>
<dbReference type="GO" id="GO:0003735">
    <property type="term" value="F:structural constituent of ribosome"/>
    <property type="evidence" value="ECO:0007669"/>
    <property type="project" value="InterPro"/>
</dbReference>
<dbReference type="GO" id="GO:0000027">
    <property type="term" value="P:ribosomal large subunit assembly"/>
    <property type="evidence" value="ECO:0007669"/>
    <property type="project" value="UniProtKB-UniRule"/>
</dbReference>
<dbReference type="GO" id="GO:0006412">
    <property type="term" value="P:translation"/>
    <property type="evidence" value="ECO:0007669"/>
    <property type="project" value="InterPro"/>
</dbReference>
<dbReference type="CDD" id="cd07026">
    <property type="entry name" value="Ribosomal_L20"/>
    <property type="match status" value="1"/>
</dbReference>
<dbReference type="FunFam" id="1.10.1900.20:FF:000001">
    <property type="entry name" value="50S ribosomal protein L20"/>
    <property type="match status" value="1"/>
</dbReference>
<dbReference type="Gene3D" id="6.10.160.10">
    <property type="match status" value="1"/>
</dbReference>
<dbReference type="Gene3D" id="1.10.1900.20">
    <property type="entry name" value="Ribosomal protein L20"/>
    <property type="match status" value="1"/>
</dbReference>
<dbReference type="HAMAP" id="MF_00382">
    <property type="entry name" value="Ribosomal_bL20"/>
    <property type="match status" value="1"/>
</dbReference>
<dbReference type="InterPro" id="IPR005813">
    <property type="entry name" value="Ribosomal_bL20"/>
</dbReference>
<dbReference type="InterPro" id="IPR049946">
    <property type="entry name" value="RIBOSOMAL_L20_CS"/>
</dbReference>
<dbReference type="InterPro" id="IPR035566">
    <property type="entry name" value="Ribosomal_protein_bL20_C"/>
</dbReference>
<dbReference type="NCBIfam" id="TIGR01032">
    <property type="entry name" value="rplT_bact"/>
    <property type="match status" value="1"/>
</dbReference>
<dbReference type="PANTHER" id="PTHR10986">
    <property type="entry name" value="39S RIBOSOMAL PROTEIN L20"/>
    <property type="match status" value="1"/>
</dbReference>
<dbReference type="Pfam" id="PF00453">
    <property type="entry name" value="Ribosomal_L20"/>
    <property type="match status" value="1"/>
</dbReference>
<dbReference type="PRINTS" id="PR00062">
    <property type="entry name" value="RIBOSOMALL20"/>
</dbReference>
<dbReference type="SUPFAM" id="SSF74731">
    <property type="entry name" value="Ribosomal protein L20"/>
    <property type="match status" value="1"/>
</dbReference>
<dbReference type="PROSITE" id="PS00937">
    <property type="entry name" value="RIBOSOMAL_L20"/>
    <property type="match status" value="1"/>
</dbReference>
<name>RL20_TREPA</name>
<comment type="function">
    <text evidence="1">Binds directly to 23S ribosomal RNA and is necessary for the in vitro assembly process of the 50S ribosomal subunit. It is not involved in the protein synthesizing functions of that subunit (By similarity).</text>
</comment>
<comment type="similarity">
    <text evidence="2">Belongs to the bacterial ribosomal protein bL20 family.</text>
</comment>
<evidence type="ECO:0000250" key="1"/>
<evidence type="ECO:0000305" key="2"/>
<gene>
    <name type="primary">rplT</name>
    <name type="ordered locus">TP_0848</name>
</gene>
<sequence length="122" mass="13401">MSRSLSSNGRVRRRKRILKLAKGFRGRCGTNYKAAKDAVSKALAHSYVARRDRKGSMRRLWISRINASVRTQGLSYSRFMNGLLQAGIALNRKVLSNMAIEDPGAFQTVIDASKKALGGGAC</sequence>
<protein>
    <recommendedName>
        <fullName evidence="2">Large ribosomal subunit protein bL20</fullName>
    </recommendedName>
    <alternativeName>
        <fullName>50S ribosomal protein L20</fullName>
    </alternativeName>
</protein>
<accession>O83820</accession>
<reference key="1">
    <citation type="journal article" date="1998" name="Science">
        <title>Complete genome sequence of Treponema pallidum, the syphilis spirochete.</title>
        <authorList>
            <person name="Fraser C.M."/>
            <person name="Norris S.J."/>
            <person name="Weinstock G.M."/>
            <person name="White O."/>
            <person name="Sutton G.G."/>
            <person name="Dodson R.J."/>
            <person name="Gwinn M.L."/>
            <person name="Hickey E.K."/>
            <person name="Clayton R.A."/>
            <person name="Ketchum K.A."/>
            <person name="Sodergren E."/>
            <person name="Hardham J.M."/>
            <person name="McLeod M.P."/>
            <person name="Salzberg S.L."/>
            <person name="Peterson J.D."/>
            <person name="Khalak H.G."/>
            <person name="Richardson D.L."/>
            <person name="Howell J.K."/>
            <person name="Chidambaram M."/>
            <person name="Utterback T.R."/>
            <person name="McDonald L.A."/>
            <person name="Artiach P."/>
            <person name="Bowman C."/>
            <person name="Cotton M.D."/>
            <person name="Fujii C."/>
            <person name="Garland S.A."/>
            <person name="Hatch B."/>
            <person name="Horst K."/>
            <person name="Roberts K.M."/>
            <person name="Sandusky M."/>
            <person name="Weidman J.F."/>
            <person name="Smith H.O."/>
            <person name="Venter J.C."/>
        </authorList>
    </citation>
    <scope>NUCLEOTIDE SEQUENCE [LARGE SCALE GENOMIC DNA]</scope>
    <source>
        <strain>Nichols</strain>
    </source>
</reference>
<feature type="chain" id="PRO_0000177253" description="Large ribosomal subunit protein bL20">
    <location>
        <begin position="1"/>
        <end position="122"/>
    </location>
</feature>